<accession>Q2G1T3</accession>
<organism>
    <name type="scientific">Staphylococcus aureus (strain NCTC 8325 / PS 47)</name>
    <dbReference type="NCBI Taxonomy" id="93061"/>
    <lineage>
        <taxon>Bacteria</taxon>
        <taxon>Bacillati</taxon>
        <taxon>Bacillota</taxon>
        <taxon>Bacilli</taxon>
        <taxon>Bacillales</taxon>
        <taxon>Staphylococcaceae</taxon>
        <taxon>Staphylococcus</taxon>
    </lineage>
</organism>
<keyword id="KW-1185">Reference proteome</keyword>
<protein>
    <recommendedName>
        <fullName>Organic hydroperoxide resistance protein-like</fullName>
    </recommendedName>
</protein>
<reference key="1">
    <citation type="book" date="2006" name="Gram positive pathogens, 2nd edition">
        <title>The Staphylococcus aureus NCTC 8325 genome.</title>
        <editorList>
            <person name="Fischetti V."/>
            <person name="Novick R."/>
            <person name="Ferretti J."/>
            <person name="Portnoy D."/>
            <person name="Rood J."/>
        </editorList>
        <authorList>
            <person name="Gillaspy A.F."/>
            <person name="Worrell V."/>
            <person name="Orvis J."/>
            <person name="Roe B.A."/>
            <person name="Dyer D.W."/>
            <person name="Iandolo J.J."/>
        </authorList>
    </citation>
    <scope>NUCLEOTIDE SEQUENCE [LARGE SCALE GENOMIC DNA]</scope>
    <source>
        <strain>NCTC 8325 / PS 47</strain>
    </source>
</reference>
<gene>
    <name type="ordered locus">SAOUHSC_00831</name>
</gene>
<name>OHRL_STAA8</name>
<proteinExistence type="inferred from homology"/>
<evidence type="ECO:0000305" key="1"/>
<sequence length="140" mass="15339">MAIHYETKATNVGGRKGHVYTDDRALDIDIVPPAQADGKATNPEQLFAAGYASCFNGAFDLILKQNKVRDAHPEVTLTVRLEDDSDSESPKLSVSIDATIKNVISQEEAEKYLQMAHEFCPYSKATQGNINVDLNVNVVD</sequence>
<feature type="chain" id="PRO_0000288961" description="Organic hydroperoxide resistance protein-like">
    <location>
        <begin position="1"/>
        <end position="140"/>
    </location>
</feature>
<comment type="similarity">
    <text evidence="1">Belongs to the OsmC/Ohr family.</text>
</comment>
<dbReference type="EMBL" id="CP000253">
    <property type="protein sequence ID" value="ABD29957.1"/>
    <property type="molecule type" value="Genomic_DNA"/>
</dbReference>
<dbReference type="RefSeq" id="WP_000974460.1">
    <property type="nucleotide sequence ID" value="NZ_LS483365.1"/>
</dbReference>
<dbReference type="RefSeq" id="YP_499385.1">
    <property type="nucleotide sequence ID" value="NC_007795.1"/>
</dbReference>
<dbReference type="SMR" id="Q2G1T3"/>
<dbReference type="STRING" id="93061.SAOUHSC_00831"/>
<dbReference type="PaxDb" id="1280-SAXN108_0871"/>
<dbReference type="GeneID" id="3918943"/>
<dbReference type="KEGG" id="sao:SAOUHSC_00831"/>
<dbReference type="PATRIC" id="fig|93061.5.peg.751"/>
<dbReference type="eggNOG" id="COG1764">
    <property type="taxonomic scope" value="Bacteria"/>
</dbReference>
<dbReference type="HOGENOM" id="CLU_106355_2_1_9"/>
<dbReference type="OrthoDB" id="9797508at2"/>
<dbReference type="PRO" id="PR:Q2G1T3"/>
<dbReference type="Proteomes" id="UP000008816">
    <property type="component" value="Chromosome"/>
</dbReference>
<dbReference type="GO" id="GO:0006979">
    <property type="term" value="P:response to oxidative stress"/>
    <property type="evidence" value="ECO:0007669"/>
    <property type="project" value="InterPro"/>
</dbReference>
<dbReference type="Gene3D" id="2.20.25.10">
    <property type="match status" value="1"/>
</dbReference>
<dbReference type="Gene3D" id="3.30.300.20">
    <property type="match status" value="1"/>
</dbReference>
<dbReference type="InterPro" id="IPR015946">
    <property type="entry name" value="KH_dom-like_a/b"/>
</dbReference>
<dbReference type="InterPro" id="IPR019953">
    <property type="entry name" value="OHR"/>
</dbReference>
<dbReference type="InterPro" id="IPR003718">
    <property type="entry name" value="OsmC/Ohr_fam"/>
</dbReference>
<dbReference type="InterPro" id="IPR036102">
    <property type="entry name" value="OsmC/Ohrsf"/>
</dbReference>
<dbReference type="NCBIfam" id="TIGR03561">
    <property type="entry name" value="organ_hyd_perox"/>
    <property type="match status" value="1"/>
</dbReference>
<dbReference type="PANTHER" id="PTHR33797">
    <property type="entry name" value="ORGANIC HYDROPEROXIDE RESISTANCE PROTEIN-LIKE"/>
    <property type="match status" value="1"/>
</dbReference>
<dbReference type="PANTHER" id="PTHR33797:SF2">
    <property type="entry name" value="ORGANIC HYDROPEROXIDE RESISTANCE PROTEIN-LIKE"/>
    <property type="match status" value="1"/>
</dbReference>
<dbReference type="Pfam" id="PF02566">
    <property type="entry name" value="OsmC"/>
    <property type="match status" value="1"/>
</dbReference>
<dbReference type="SUPFAM" id="SSF82784">
    <property type="entry name" value="OsmC-like"/>
    <property type="match status" value="1"/>
</dbReference>